<protein>
    <recommendedName>
        <fullName evidence="1">NADH-quinone oxidoreductase subunit N</fullName>
        <ecNumber evidence="1">7.1.1.-</ecNumber>
    </recommendedName>
    <alternativeName>
        <fullName evidence="1">NADH dehydrogenase I subunit N</fullName>
    </alternativeName>
    <alternativeName>
        <fullName evidence="1">NDH-1 subunit N</fullName>
    </alternativeName>
</protein>
<comment type="function">
    <text evidence="1">NDH-1 shuttles electrons from NADH, via FMN and iron-sulfur (Fe-S) centers, to quinones in the respiratory chain. The immediate electron acceptor for the enzyme in this species is believed to be ubiquinone. Couples the redox reaction to proton translocation (for every two electrons transferred, four hydrogen ions are translocated across the cytoplasmic membrane), and thus conserves the redox energy in a proton gradient.</text>
</comment>
<comment type="catalytic activity">
    <reaction evidence="1">
        <text>a quinone + NADH + 5 H(+)(in) = a quinol + NAD(+) + 4 H(+)(out)</text>
        <dbReference type="Rhea" id="RHEA:57888"/>
        <dbReference type="ChEBI" id="CHEBI:15378"/>
        <dbReference type="ChEBI" id="CHEBI:24646"/>
        <dbReference type="ChEBI" id="CHEBI:57540"/>
        <dbReference type="ChEBI" id="CHEBI:57945"/>
        <dbReference type="ChEBI" id="CHEBI:132124"/>
    </reaction>
</comment>
<comment type="subunit">
    <text evidence="1">NDH-1 is composed of 14 different subunits. Subunits NuoA, H, J, K, L, M, N constitute the membrane sector of the complex.</text>
</comment>
<comment type="subcellular location">
    <subcellularLocation>
        <location evidence="1">Cell inner membrane</location>
        <topology evidence="1">Multi-pass membrane protein</topology>
    </subcellularLocation>
</comment>
<comment type="similarity">
    <text evidence="1">Belongs to the complex I subunit 2 family.</text>
</comment>
<evidence type="ECO:0000255" key="1">
    <source>
        <dbReference type="HAMAP-Rule" id="MF_00445"/>
    </source>
</evidence>
<sequence>MNQYLFLLPEITLFILSCLLLFLKSRNEFGLIAVLITLAATFFSQTCTSVEILNGMLLISPFTQNVKLVILAFTCVFFIQAIAVKQSYSKNFSVLVLLSLLGMLLSVSSSTLASLYLAVELHSIGQYILACIKHKSIKSAEAGVKYTLLGTFMSAVMIYGISLIFVVSGDLSLKSLFIANSKIHSIGILLFISGLMFKVAAAPFHAWIGDIYEGAPTVSTTFFAVLPKLSLIVVLVSLISNLEPIAYTGSTYSTELMENSQYLRNILFTSGILSIAFGTFSAFGQKNIKRFIGFASIAHVGYMLLGVSNSASLSFGNPGIAYALVYSFTNLGILSVVLMLKDKHITSLKKLRCSNNLVALAFVLLLFSSAGVPPFIGFWSKAYVVKTLVETNHIPTAIFSMLAGVISAFYYARIAKETYFTNMAEENIEASLRHNTLLTSIVVLCALFSTFGFVLLIY</sequence>
<proteinExistence type="inferred from homology"/>
<feature type="chain" id="PRO_0000391186" description="NADH-quinone oxidoreductase subunit N">
    <location>
        <begin position="1"/>
        <end position="458"/>
    </location>
</feature>
<feature type="transmembrane region" description="Helical" evidence="1">
    <location>
        <begin position="3"/>
        <end position="23"/>
    </location>
</feature>
<feature type="transmembrane region" description="Helical" evidence="1">
    <location>
        <begin position="29"/>
        <end position="49"/>
    </location>
</feature>
<feature type="transmembrane region" description="Helical" evidence="1">
    <location>
        <begin position="64"/>
        <end position="84"/>
    </location>
</feature>
<feature type="transmembrane region" description="Helical" evidence="1">
    <location>
        <begin position="92"/>
        <end position="112"/>
    </location>
</feature>
<feature type="transmembrane region" description="Helical" evidence="1">
    <location>
        <begin position="147"/>
        <end position="167"/>
    </location>
</feature>
<feature type="transmembrane region" description="Helical" evidence="1">
    <location>
        <begin position="188"/>
        <end position="208"/>
    </location>
</feature>
<feature type="transmembrane region" description="Helical" evidence="1">
    <location>
        <begin position="222"/>
        <end position="242"/>
    </location>
</feature>
<feature type="transmembrane region" description="Helical" evidence="1">
    <location>
        <begin position="265"/>
        <end position="285"/>
    </location>
</feature>
<feature type="transmembrane region" description="Helical" evidence="1">
    <location>
        <begin position="291"/>
        <end position="311"/>
    </location>
</feature>
<feature type="transmembrane region" description="Helical" evidence="1">
    <location>
        <begin position="320"/>
        <end position="340"/>
    </location>
</feature>
<feature type="transmembrane region" description="Helical" evidence="1">
    <location>
        <begin position="358"/>
        <end position="378"/>
    </location>
</feature>
<feature type="transmembrane region" description="Helical" evidence="1">
    <location>
        <begin position="394"/>
        <end position="414"/>
    </location>
</feature>
<feature type="transmembrane region" description="Helical" evidence="1">
    <location>
        <begin position="437"/>
        <end position="457"/>
    </location>
</feature>
<name>NUON_NEORI</name>
<organism>
    <name type="scientific">Neorickettsia risticii (strain Illinois)</name>
    <dbReference type="NCBI Taxonomy" id="434131"/>
    <lineage>
        <taxon>Bacteria</taxon>
        <taxon>Pseudomonadati</taxon>
        <taxon>Pseudomonadota</taxon>
        <taxon>Alphaproteobacteria</taxon>
        <taxon>Rickettsiales</taxon>
        <taxon>Anaplasmataceae</taxon>
        <taxon>Neorickettsia</taxon>
    </lineage>
</organism>
<gene>
    <name evidence="1" type="primary">nuoN</name>
    <name type="ordered locus">NRI_0669</name>
</gene>
<reference key="1">
    <citation type="journal article" date="2009" name="Nucleic Acids Res.">
        <title>Analysis of complete genome sequence of Neorickettsia risticii: causative agent of Potomac horse fever.</title>
        <authorList>
            <person name="Lin M."/>
            <person name="Zhang C."/>
            <person name="Gibson K."/>
            <person name="Rikihisa Y."/>
        </authorList>
    </citation>
    <scope>NUCLEOTIDE SEQUENCE [LARGE SCALE GENOMIC DNA]</scope>
    <source>
        <strain>Illinois</strain>
    </source>
</reference>
<dbReference type="EC" id="7.1.1.-" evidence="1"/>
<dbReference type="EMBL" id="CP001431">
    <property type="protein sequence ID" value="ACT69641.1"/>
    <property type="molecule type" value="Genomic_DNA"/>
</dbReference>
<dbReference type="RefSeq" id="WP_015816527.1">
    <property type="nucleotide sequence ID" value="NC_013009.1"/>
</dbReference>
<dbReference type="SMR" id="C6V5H7"/>
<dbReference type="STRING" id="434131.NRI_0669"/>
<dbReference type="KEGG" id="nri:NRI_0669"/>
<dbReference type="eggNOG" id="COG1007">
    <property type="taxonomic scope" value="Bacteria"/>
</dbReference>
<dbReference type="HOGENOM" id="CLU_007100_1_3_5"/>
<dbReference type="OrthoDB" id="9811718at2"/>
<dbReference type="Proteomes" id="UP000001627">
    <property type="component" value="Chromosome"/>
</dbReference>
<dbReference type="GO" id="GO:0005886">
    <property type="term" value="C:plasma membrane"/>
    <property type="evidence" value="ECO:0007669"/>
    <property type="project" value="UniProtKB-SubCell"/>
</dbReference>
<dbReference type="GO" id="GO:0008137">
    <property type="term" value="F:NADH dehydrogenase (ubiquinone) activity"/>
    <property type="evidence" value="ECO:0007669"/>
    <property type="project" value="InterPro"/>
</dbReference>
<dbReference type="GO" id="GO:0050136">
    <property type="term" value="F:NADH:ubiquinone reductase (non-electrogenic) activity"/>
    <property type="evidence" value="ECO:0007669"/>
    <property type="project" value="UniProtKB-UniRule"/>
</dbReference>
<dbReference type="GO" id="GO:0048038">
    <property type="term" value="F:quinone binding"/>
    <property type="evidence" value="ECO:0007669"/>
    <property type="project" value="UniProtKB-KW"/>
</dbReference>
<dbReference type="GO" id="GO:0042773">
    <property type="term" value="P:ATP synthesis coupled electron transport"/>
    <property type="evidence" value="ECO:0007669"/>
    <property type="project" value="InterPro"/>
</dbReference>
<dbReference type="HAMAP" id="MF_00445">
    <property type="entry name" value="NDH1_NuoN_1"/>
    <property type="match status" value="1"/>
</dbReference>
<dbReference type="InterPro" id="IPR010096">
    <property type="entry name" value="NADH-Q_OxRdtase_suN/2"/>
</dbReference>
<dbReference type="InterPro" id="IPR001750">
    <property type="entry name" value="ND/Mrp_TM"/>
</dbReference>
<dbReference type="PANTHER" id="PTHR22773">
    <property type="entry name" value="NADH DEHYDROGENASE"/>
    <property type="match status" value="1"/>
</dbReference>
<dbReference type="Pfam" id="PF00361">
    <property type="entry name" value="Proton_antipo_M"/>
    <property type="match status" value="1"/>
</dbReference>
<keyword id="KW-0997">Cell inner membrane</keyword>
<keyword id="KW-1003">Cell membrane</keyword>
<keyword id="KW-0472">Membrane</keyword>
<keyword id="KW-0520">NAD</keyword>
<keyword id="KW-0874">Quinone</keyword>
<keyword id="KW-1278">Translocase</keyword>
<keyword id="KW-0812">Transmembrane</keyword>
<keyword id="KW-1133">Transmembrane helix</keyword>
<keyword id="KW-0813">Transport</keyword>
<keyword id="KW-0830">Ubiquinone</keyword>
<accession>C6V5H7</accession>